<proteinExistence type="inferred from homology"/>
<accession>Q49L04</accession>
<organism>
    <name type="scientific">Eucalyptus globulus subsp. globulus</name>
    <name type="common">Tasmanian blue gum</name>
    <dbReference type="NCBI Taxonomy" id="71271"/>
    <lineage>
        <taxon>Eukaryota</taxon>
        <taxon>Viridiplantae</taxon>
        <taxon>Streptophyta</taxon>
        <taxon>Embryophyta</taxon>
        <taxon>Tracheophyta</taxon>
        <taxon>Spermatophyta</taxon>
        <taxon>Magnoliopsida</taxon>
        <taxon>eudicotyledons</taxon>
        <taxon>Gunneridae</taxon>
        <taxon>Pentapetalae</taxon>
        <taxon>rosids</taxon>
        <taxon>malvids</taxon>
        <taxon>Myrtales</taxon>
        <taxon>Myrtaceae</taxon>
        <taxon>Myrtoideae</taxon>
        <taxon>Eucalypteae</taxon>
        <taxon>Eucalyptus</taxon>
    </lineage>
</organism>
<protein>
    <recommendedName>
        <fullName evidence="1">Photosystem II reaction center protein M</fullName>
        <shortName evidence="1">PSII-M</shortName>
    </recommendedName>
</protein>
<keyword id="KW-0150">Chloroplast</keyword>
<keyword id="KW-0472">Membrane</keyword>
<keyword id="KW-0602">Photosynthesis</keyword>
<keyword id="KW-0604">Photosystem II</keyword>
<keyword id="KW-0934">Plastid</keyword>
<keyword id="KW-0674">Reaction center</keyword>
<keyword id="KW-0793">Thylakoid</keyword>
<keyword id="KW-0812">Transmembrane</keyword>
<keyword id="KW-1133">Transmembrane helix</keyword>
<name>PSBM_EUCGG</name>
<geneLocation type="chloroplast"/>
<dbReference type="EMBL" id="AY780259">
    <property type="protein sequence ID" value="AAX21023.1"/>
    <property type="molecule type" value="Genomic_DNA"/>
</dbReference>
<dbReference type="RefSeq" id="YP_636293.1">
    <property type="nucleotide sequence ID" value="NC_008115.1"/>
</dbReference>
<dbReference type="SMR" id="Q49L04"/>
<dbReference type="GeneID" id="4108365"/>
<dbReference type="GO" id="GO:0009535">
    <property type="term" value="C:chloroplast thylakoid membrane"/>
    <property type="evidence" value="ECO:0007669"/>
    <property type="project" value="UniProtKB-SubCell"/>
</dbReference>
<dbReference type="GO" id="GO:0009523">
    <property type="term" value="C:photosystem II"/>
    <property type="evidence" value="ECO:0007669"/>
    <property type="project" value="UniProtKB-KW"/>
</dbReference>
<dbReference type="GO" id="GO:0019684">
    <property type="term" value="P:photosynthesis, light reaction"/>
    <property type="evidence" value="ECO:0007669"/>
    <property type="project" value="InterPro"/>
</dbReference>
<dbReference type="HAMAP" id="MF_00438">
    <property type="entry name" value="PSII_PsbM"/>
    <property type="match status" value="1"/>
</dbReference>
<dbReference type="InterPro" id="IPR007826">
    <property type="entry name" value="PSII_PsbM"/>
</dbReference>
<dbReference type="InterPro" id="IPR037269">
    <property type="entry name" value="PSII_PsbM_sf"/>
</dbReference>
<dbReference type="NCBIfam" id="TIGR03038">
    <property type="entry name" value="PS_II_psbM"/>
    <property type="match status" value="1"/>
</dbReference>
<dbReference type="PANTHER" id="PTHR35774">
    <property type="entry name" value="PHOTOSYSTEM II REACTION CENTER PROTEIN M"/>
    <property type="match status" value="1"/>
</dbReference>
<dbReference type="PANTHER" id="PTHR35774:SF1">
    <property type="entry name" value="PHOTOSYSTEM II REACTION CENTER PROTEIN M"/>
    <property type="match status" value="1"/>
</dbReference>
<dbReference type="Pfam" id="PF05151">
    <property type="entry name" value="PsbM"/>
    <property type="match status" value="1"/>
</dbReference>
<dbReference type="SUPFAM" id="SSF161033">
    <property type="entry name" value="Photosystem II reaction center protein M, PsbM"/>
    <property type="match status" value="1"/>
</dbReference>
<comment type="function">
    <text evidence="1">One of the components of the core complex of photosystem II (PSII). PSII is a light-driven water:plastoquinone oxidoreductase that uses light energy to abstract electrons from H(2)O, generating O(2) and a proton gradient subsequently used for ATP formation. It consists of a core antenna complex that captures photons, and an electron transfer chain that converts photonic excitation into a charge separation. This subunit is found at the monomer-monomer interface.</text>
</comment>
<comment type="subunit">
    <text evidence="1">PSII is composed of 1 copy each of membrane proteins PsbA, PsbB, PsbC, PsbD, PsbE, PsbF, PsbH, PsbI, PsbJ, PsbK, PsbL, PsbM, PsbT, PsbX, PsbY, PsbZ, Psb30/Ycf12, at least 3 peripheral proteins of the oxygen-evolving complex and a large number of cofactors. It forms dimeric complexes.</text>
</comment>
<comment type="subcellular location">
    <subcellularLocation>
        <location evidence="1">Plastid</location>
        <location evidence="1">Chloroplast thylakoid membrane</location>
        <topology evidence="1">Single-pass membrane protein</topology>
    </subcellularLocation>
</comment>
<comment type="similarity">
    <text evidence="1">Belongs to the PsbM family.</text>
</comment>
<feature type="chain" id="PRO_0000276238" description="Photosystem II reaction center protein M">
    <location>
        <begin position="1"/>
        <end position="34"/>
    </location>
</feature>
<feature type="transmembrane region" description="Helical" evidence="1">
    <location>
        <begin position="5"/>
        <end position="25"/>
    </location>
</feature>
<sequence length="34" mass="3756">MEVNILAFIATALFILVPTAFLLIIYVKTVSQSD</sequence>
<evidence type="ECO:0000255" key="1">
    <source>
        <dbReference type="HAMAP-Rule" id="MF_00438"/>
    </source>
</evidence>
<reference key="1">
    <citation type="journal article" date="2005" name="DNA Res.">
        <title>Complete nucleotide sequence of the chloroplast genome from the Tasmanian blue gum, Eucalyptus globulus (Myrtaceae).</title>
        <authorList>
            <person name="Steane D.A."/>
        </authorList>
    </citation>
    <scope>NUCLEOTIDE SEQUENCE [LARGE SCALE GENOMIC DNA]</scope>
</reference>
<gene>
    <name evidence="1" type="primary">psbM</name>
</gene>